<reference key="1">
    <citation type="journal article" date="2016" name="Stand. Genomic Sci.">
        <title>Complete genome sequence of Methanospirillum hungatei type strain JF1.</title>
        <authorList>
            <person name="Gunsalus R.P."/>
            <person name="Cook L.E."/>
            <person name="Crable B."/>
            <person name="Rohlin L."/>
            <person name="McDonald E."/>
            <person name="Mouttaki H."/>
            <person name="Sieber J.R."/>
            <person name="Poweleit N."/>
            <person name="Zhou H."/>
            <person name="Lapidus A.L."/>
            <person name="Daligault H.E."/>
            <person name="Land M."/>
            <person name="Gilna P."/>
            <person name="Ivanova N."/>
            <person name="Kyrpides N."/>
            <person name="Culley D.E."/>
            <person name="McInerney M.J."/>
        </authorList>
    </citation>
    <scope>NUCLEOTIDE SEQUENCE [LARGE SCALE GENOMIC DNA]</scope>
    <source>
        <strain>ATCC 27890 / DSM 864 / NBRC 100397 / JF-1</strain>
    </source>
</reference>
<feature type="chain" id="PRO_0000325540" description="3-dehydroquinate dehydratase">
    <location>
        <begin position="1"/>
        <end position="256"/>
    </location>
</feature>
<feature type="active site" description="Proton donor/acceptor" evidence="1">
    <location>
        <position position="122"/>
    </location>
</feature>
<feature type="active site" description="Schiff-base intermediate with substrate" evidence="1">
    <location>
        <position position="147"/>
    </location>
</feature>
<feature type="binding site" evidence="1">
    <location>
        <position position="19"/>
    </location>
    <ligand>
        <name>3-dehydroquinate</name>
        <dbReference type="ChEBI" id="CHEBI:32364"/>
    </ligand>
</feature>
<feature type="binding site" evidence="1">
    <location>
        <begin position="38"/>
        <end position="40"/>
    </location>
    <ligand>
        <name>3-dehydroquinate</name>
        <dbReference type="ChEBI" id="CHEBI:32364"/>
    </ligand>
</feature>
<feature type="binding site" evidence="1">
    <location>
        <position position="68"/>
    </location>
    <ligand>
        <name>3-dehydroquinate</name>
        <dbReference type="ChEBI" id="CHEBI:32364"/>
    </ligand>
</feature>
<feature type="binding site" evidence="1">
    <location>
        <position position="185"/>
    </location>
    <ligand>
        <name>3-dehydroquinate</name>
        <dbReference type="ChEBI" id="CHEBI:32364"/>
    </ligand>
</feature>
<feature type="binding site" evidence="1">
    <location>
        <position position="204"/>
    </location>
    <ligand>
        <name>3-dehydroquinate</name>
        <dbReference type="ChEBI" id="CHEBI:32364"/>
    </ligand>
</feature>
<feature type="binding site" evidence="1">
    <location>
        <position position="208"/>
    </location>
    <ligand>
        <name>3-dehydroquinate</name>
        <dbReference type="ChEBI" id="CHEBI:32364"/>
    </ligand>
</feature>
<comment type="function">
    <text evidence="1">Involved in the third step of the chorismate pathway, which leads to the biosynthesis of aromatic amino acids. Catalyzes the cis-dehydration of 3-dehydroquinate (DHQ) and introduces the first double bond of the aromatic ring to yield 3-dehydroshikimate.</text>
</comment>
<comment type="catalytic activity">
    <reaction evidence="1">
        <text>3-dehydroquinate = 3-dehydroshikimate + H2O</text>
        <dbReference type="Rhea" id="RHEA:21096"/>
        <dbReference type="ChEBI" id="CHEBI:15377"/>
        <dbReference type="ChEBI" id="CHEBI:16630"/>
        <dbReference type="ChEBI" id="CHEBI:32364"/>
        <dbReference type="EC" id="4.2.1.10"/>
    </reaction>
</comment>
<comment type="pathway">
    <text evidence="1">Metabolic intermediate biosynthesis; chorismate biosynthesis; chorismate from D-erythrose 4-phosphate and phosphoenolpyruvate: step 3/7.</text>
</comment>
<comment type="subunit">
    <text evidence="1">Homodimer.</text>
</comment>
<comment type="similarity">
    <text evidence="1">Belongs to the type-I 3-dehydroquinase family.</text>
</comment>
<evidence type="ECO:0000255" key="1">
    <source>
        <dbReference type="HAMAP-Rule" id="MF_00214"/>
    </source>
</evidence>
<protein>
    <recommendedName>
        <fullName evidence="1">3-dehydroquinate dehydratase</fullName>
        <shortName evidence="1">3-dehydroquinase</shortName>
        <ecNumber evidence="1">4.2.1.10</ecNumber>
    </recommendedName>
    <alternativeName>
        <fullName evidence="1">Type I DHQase</fullName>
    </alternativeName>
    <alternativeName>
        <fullName evidence="1">Type I dehydroquinase</fullName>
        <shortName evidence="1">DHQ1</shortName>
    </alternativeName>
</protein>
<proteinExistence type="inferred from homology"/>
<keyword id="KW-0028">Amino-acid biosynthesis</keyword>
<keyword id="KW-0057">Aromatic amino acid biosynthesis</keyword>
<keyword id="KW-0456">Lyase</keyword>
<keyword id="KW-1185">Reference proteome</keyword>
<keyword id="KW-0704">Schiff base</keyword>
<accession>Q2FQV3</accession>
<organism>
    <name type="scientific">Methanospirillum hungatei JF-1 (strain ATCC 27890 / DSM 864 / NBRC 100397 / JF-1)</name>
    <dbReference type="NCBI Taxonomy" id="323259"/>
    <lineage>
        <taxon>Archaea</taxon>
        <taxon>Methanobacteriati</taxon>
        <taxon>Methanobacteriota</taxon>
        <taxon>Stenosarchaea group</taxon>
        <taxon>Methanomicrobia</taxon>
        <taxon>Methanomicrobiales</taxon>
        <taxon>Methanospirillaceae</taxon>
        <taxon>Methanospirillum</taxon>
    </lineage>
</organism>
<gene>
    <name evidence="1" type="primary">aroD</name>
    <name type="ordered locus">Mhun_0979</name>
</gene>
<dbReference type="EC" id="4.2.1.10" evidence="1"/>
<dbReference type="EMBL" id="CP000254">
    <property type="protein sequence ID" value="ABD40729.1"/>
    <property type="molecule type" value="Genomic_DNA"/>
</dbReference>
<dbReference type="RefSeq" id="WP_011448008.1">
    <property type="nucleotide sequence ID" value="NC_007796.1"/>
</dbReference>
<dbReference type="SMR" id="Q2FQV3"/>
<dbReference type="FunCoup" id="Q2FQV3">
    <property type="interactions" value="71"/>
</dbReference>
<dbReference type="STRING" id="323259.Mhun_0979"/>
<dbReference type="EnsemblBacteria" id="ABD40729">
    <property type="protein sequence ID" value="ABD40729"/>
    <property type="gene ID" value="Mhun_0979"/>
</dbReference>
<dbReference type="GeneID" id="3923623"/>
<dbReference type="KEGG" id="mhu:Mhun_0979"/>
<dbReference type="eggNOG" id="arCOG02097">
    <property type="taxonomic scope" value="Archaea"/>
</dbReference>
<dbReference type="HOGENOM" id="CLU_064444_2_0_2"/>
<dbReference type="InParanoid" id="Q2FQV3"/>
<dbReference type="OrthoDB" id="34329at2157"/>
<dbReference type="UniPathway" id="UPA00053">
    <property type="reaction ID" value="UER00086"/>
</dbReference>
<dbReference type="Proteomes" id="UP000001941">
    <property type="component" value="Chromosome"/>
</dbReference>
<dbReference type="GO" id="GO:0003855">
    <property type="term" value="F:3-dehydroquinate dehydratase activity"/>
    <property type="evidence" value="ECO:0007669"/>
    <property type="project" value="UniProtKB-UniRule"/>
</dbReference>
<dbReference type="GO" id="GO:0046279">
    <property type="term" value="P:3,4-dihydroxybenzoate biosynthetic process"/>
    <property type="evidence" value="ECO:0007669"/>
    <property type="project" value="UniProtKB-ARBA"/>
</dbReference>
<dbReference type="GO" id="GO:0008652">
    <property type="term" value="P:amino acid biosynthetic process"/>
    <property type="evidence" value="ECO:0007669"/>
    <property type="project" value="UniProtKB-KW"/>
</dbReference>
<dbReference type="GO" id="GO:0009073">
    <property type="term" value="P:aromatic amino acid family biosynthetic process"/>
    <property type="evidence" value="ECO:0007669"/>
    <property type="project" value="UniProtKB-KW"/>
</dbReference>
<dbReference type="GO" id="GO:0009423">
    <property type="term" value="P:chorismate biosynthetic process"/>
    <property type="evidence" value="ECO:0007669"/>
    <property type="project" value="UniProtKB-UniRule"/>
</dbReference>
<dbReference type="CDD" id="cd00502">
    <property type="entry name" value="DHQase_I"/>
    <property type="match status" value="1"/>
</dbReference>
<dbReference type="Gene3D" id="3.20.20.70">
    <property type="entry name" value="Aldolase class I"/>
    <property type="match status" value="1"/>
</dbReference>
<dbReference type="HAMAP" id="MF_00214">
    <property type="entry name" value="AroD"/>
    <property type="match status" value="1"/>
</dbReference>
<dbReference type="InterPro" id="IPR013785">
    <property type="entry name" value="Aldolase_TIM"/>
</dbReference>
<dbReference type="InterPro" id="IPR001381">
    <property type="entry name" value="DHquinase_I"/>
</dbReference>
<dbReference type="InterPro" id="IPR050146">
    <property type="entry name" value="Type-I_3-dehydroquinase"/>
</dbReference>
<dbReference type="PANTHER" id="PTHR43699">
    <property type="entry name" value="3-DEHYDROQUINATE DEHYDRATASE"/>
    <property type="match status" value="1"/>
</dbReference>
<dbReference type="PANTHER" id="PTHR43699:SF1">
    <property type="entry name" value="3-DEHYDROQUINATE DEHYDRATASE"/>
    <property type="match status" value="1"/>
</dbReference>
<dbReference type="Pfam" id="PF01487">
    <property type="entry name" value="DHquinase_I"/>
    <property type="match status" value="1"/>
</dbReference>
<dbReference type="SUPFAM" id="SSF51569">
    <property type="entry name" value="Aldolase"/>
    <property type="match status" value="1"/>
</dbReference>
<sequence length="256" mass="28756">MTSDALKADPNRLIKIIASLSSTRELLSPEVTKADALEIRLDLITEPIDDALHSLRTSFQGPMVLTVRSSDEGGAYAGGSAGLWKKLEPYIGLVDIIDLEIRFKDHAPQVKEHNKAIIASCHQNRMPDDDEMQALIEELHSFGDIVKIAVQPQTKEDVIRLLKITAACPYPIIMSVTGTVYRYARPLLCLFGSLYTYCYIHSETSPGQYSLREMQLLAHLLSPGFVDPWFEGRPVRSGDASGYYERAEQYRKHLEF</sequence>
<name>AROD_METHJ</name>